<accession>Q5HB61</accession>
<accession>Q5FCA7</accession>
<protein>
    <recommendedName>
        <fullName evidence="2">Translation initiation factor IF-2</fullName>
    </recommendedName>
</protein>
<dbReference type="EMBL" id="CR767821">
    <property type="protein sequence ID" value="CAH58197.1"/>
    <property type="molecule type" value="Genomic_DNA"/>
</dbReference>
<dbReference type="EMBL" id="CR925678">
    <property type="protein sequence ID" value="CAI26985.1"/>
    <property type="molecule type" value="Genomic_DNA"/>
</dbReference>
<dbReference type="RefSeq" id="WP_011155150.1">
    <property type="nucleotide sequence ID" value="NC_005295.2"/>
</dbReference>
<dbReference type="SMR" id="Q5HB61"/>
<dbReference type="GeneID" id="33058196"/>
<dbReference type="KEGG" id="eru:Erum4690"/>
<dbReference type="KEGG" id="erw:ERWE_CDS_04910"/>
<dbReference type="eggNOG" id="COG0532">
    <property type="taxonomic scope" value="Bacteria"/>
</dbReference>
<dbReference type="HOGENOM" id="CLU_006301_10_2_5"/>
<dbReference type="Proteomes" id="UP000001021">
    <property type="component" value="Chromosome"/>
</dbReference>
<dbReference type="GO" id="GO:0005737">
    <property type="term" value="C:cytoplasm"/>
    <property type="evidence" value="ECO:0007669"/>
    <property type="project" value="UniProtKB-SubCell"/>
</dbReference>
<dbReference type="GO" id="GO:0005525">
    <property type="term" value="F:GTP binding"/>
    <property type="evidence" value="ECO:0007669"/>
    <property type="project" value="UniProtKB-KW"/>
</dbReference>
<dbReference type="GO" id="GO:0003924">
    <property type="term" value="F:GTPase activity"/>
    <property type="evidence" value="ECO:0007669"/>
    <property type="project" value="UniProtKB-UniRule"/>
</dbReference>
<dbReference type="GO" id="GO:0003743">
    <property type="term" value="F:translation initiation factor activity"/>
    <property type="evidence" value="ECO:0007669"/>
    <property type="project" value="UniProtKB-UniRule"/>
</dbReference>
<dbReference type="CDD" id="cd01887">
    <property type="entry name" value="IF2_eIF5B"/>
    <property type="match status" value="1"/>
</dbReference>
<dbReference type="CDD" id="cd03702">
    <property type="entry name" value="IF2_mtIF2_II"/>
    <property type="match status" value="1"/>
</dbReference>
<dbReference type="CDD" id="cd03692">
    <property type="entry name" value="mtIF2_IVc"/>
    <property type="match status" value="1"/>
</dbReference>
<dbReference type="FunFam" id="2.40.30.10:FF:000008">
    <property type="entry name" value="Translation initiation factor IF-2"/>
    <property type="match status" value="1"/>
</dbReference>
<dbReference type="FunFam" id="2.40.30.10:FF:000054">
    <property type="entry name" value="Translation initiation factor IF-2"/>
    <property type="match status" value="1"/>
</dbReference>
<dbReference type="FunFam" id="3.40.50.10050:FF:000001">
    <property type="entry name" value="Translation initiation factor IF-2"/>
    <property type="match status" value="1"/>
</dbReference>
<dbReference type="FunFam" id="3.40.50.300:FF:000019">
    <property type="entry name" value="Translation initiation factor IF-2"/>
    <property type="match status" value="1"/>
</dbReference>
<dbReference type="Gene3D" id="3.40.50.300">
    <property type="entry name" value="P-loop containing nucleotide triphosphate hydrolases"/>
    <property type="match status" value="1"/>
</dbReference>
<dbReference type="Gene3D" id="2.40.30.10">
    <property type="entry name" value="Translation factors"/>
    <property type="match status" value="2"/>
</dbReference>
<dbReference type="Gene3D" id="3.40.50.10050">
    <property type="entry name" value="Translation initiation factor IF- 2, domain 3"/>
    <property type="match status" value="1"/>
</dbReference>
<dbReference type="HAMAP" id="MF_00100_B">
    <property type="entry name" value="IF_2_B"/>
    <property type="match status" value="1"/>
</dbReference>
<dbReference type="InterPro" id="IPR053905">
    <property type="entry name" value="EF-G-like_DII"/>
</dbReference>
<dbReference type="InterPro" id="IPR044145">
    <property type="entry name" value="IF2_II"/>
</dbReference>
<dbReference type="InterPro" id="IPR006847">
    <property type="entry name" value="IF2_N"/>
</dbReference>
<dbReference type="InterPro" id="IPR027417">
    <property type="entry name" value="P-loop_NTPase"/>
</dbReference>
<dbReference type="InterPro" id="IPR005225">
    <property type="entry name" value="Small_GTP-bd"/>
</dbReference>
<dbReference type="InterPro" id="IPR000795">
    <property type="entry name" value="T_Tr_GTP-bd_dom"/>
</dbReference>
<dbReference type="InterPro" id="IPR000178">
    <property type="entry name" value="TF_IF2_bacterial-like"/>
</dbReference>
<dbReference type="InterPro" id="IPR015760">
    <property type="entry name" value="TIF_IF2"/>
</dbReference>
<dbReference type="InterPro" id="IPR023115">
    <property type="entry name" value="TIF_IF2_dom3"/>
</dbReference>
<dbReference type="InterPro" id="IPR036925">
    <property type="entry name" value="TIF_IF2_dom3_sf"/>
</dbReference>
<dbReference type="InterPro" id="IPR009000">
    <property type="entry name" value="Transl_B-barrel_sf"/>
</dbReference>
<dbReference type="NCBIfam" id="TIGR00487">
    <property type="entry name" value="IF-2"/>
    <property type="match status" value="1"/>
</dbReference>
<dbReference type="NCBIfam" id="TIGR00231">
    <property type="entry name" value="small_GTP"/>
    <property type="match status" value="1"/>
</dbReference>
<dbReference type="PANTHER" id="PTHR43381:SF5">
    <property type="entry name" value="TR-TYPE G DOMAIN-CONTAINING PROTEIN"/>
    <property type="match status" value="1"/>
</dbReference>
<dbReference type="PANTHER" id="PTHR43381">
    <property type="entry name" value="TRANSLATION INITIATION FACTOR IF-2-RELATED"/>
    <property type="match status" value="1"/>
</dbReference>
<dbReference type="Pfam" id="PF22042">
    <property type="entry name" value="EF-G_D2"/>
    <property type="match status" value="1"/>
</dbReference>
<dbReference type="Pfam" id="PF00009">
    <property type="entry name" value="GTP_EFTU"/>
    <property type="match status" value="1"/>
</dbReference>
<dbReference type="Pfam" id="PF11987">
    <property type="entry name" value="IF-2"/>
    <property type="match status" value="1"/>
</dbReference>
<dbReference type="Pfam" id="PF04760">
    <property type="entry name" value="IF2_N"/>
    <property type="match status" value="1"/>
</dbReference>
<dbReference type="SUPFAM" id="SSF52156">
    <property type="entry name" value="Initiation factor IF2/eIF5b, domain 3"/>
    <property type="match status" value="1"/>
</dbReference>
<dbReference type="SUPFAM" id="SSF52540">
    <property type="entry name" value="P-loop containing nucleoside triphosphate hydrolases"/>
    <property type="match status" value="1"/>
</dbReference>
<dbReference type="SUPFAM" id="SSF50447">
    <property type="entry name" value="Translation proteins"/>
    <property type="match status" value="2"/>
</dbReference>
<dbReference type="PROSITE" id="PS51722">
    <property type="entry name" value="G_TR_2"/>
    <property type="match status" value="1"/>
</dbReference>
<dbReference type="PROSITE" id="PS01176">
    <property type="entry name" value="IF2"/>
    <property type="match status" value="1"/>
</dbReference>
<organism>
    <name type="scientific">Ehrlichia ruminantium (strain Welgevonden)</name>
    <dbReference type="NCBI Taxonomy" id="254945"/>
    <lineage>
        <taxon>Bacteria</taxon>
        <taxon>Pseudomonadati</taxon>
        <taxon>Pseudomonadota</taxon>
        <taxon>Alphaproteobacteria</taxon>
        <taxon>Rickettsiales</taxon>
        <taxon>Anaplasmataceae</taxon>
        <taxon>Ehrlichia</taxon>
    </lineage>
</organism>
<comment type="function">
    <text evidence="2">One of the essential components for the initiation of protein synthesis. Protects formylmethionyl-tRNA from spontaneous hydrolysis and promotes its binding to the 30S ribosomal subunits. Also involved in the hydrolysis of GTP during the formation of the 70S ribosomal complex.</text>
</comment>
<comment type="subcellular location">
    <subcellularLocation>
        <location evidence="2">Cytoplasm</location>
    </subcellularLocation>
</comment>
<comment type="similarity">
    <text evidence="2">Belongs to the TRAFAC class translation factor GTPase superfamily. Classic translation factor GTPase family. IF-2 subfamily.</text>
</comment>
<gene>
    <name evidence="2" type="primary">infB</name>
    <name type="ordered locus">Erum4690</name>
    <name type="ordered locus">ERWE_CDS_04910</name>
</gene>
<proteinExistence type="inferred from homology"/>
<name>IF2_EHRRW</name>
<reference key="1">
    <citation type="journal article" date="2005" name="Proc. Natl. Acad. Sci. U.S.A.">
        <title>The genome of the heartwater agent Ehrlichia ruminantium contains multiple tandem repeats of actively variable copy number.</title>
        <authorList>
            <person name="Collins N.E."/>
            <person name="Liebenberg J."/>
            <person name="de Villiers E.P."/>
            <person name="Brayton K.A."/>
            <person name="Louw E."/>
            <person name="Pretorius A."/>
            <person name="Faber F.E."/>
            <person name="van Heerden H."/>
            <person name="Josemans A."/>
            <person name="van Kleef M."/>
            <person name="Steyn H.C."/>
            <person name="van Strijp M.F."/>
            <person name="Zweygarth E."/>
            <person name="Jongejan F."/>
            <person name="Maillard J.C."/>
            <person name="Berthier D."/>
            <person name="Botha M."/>
            <person name="Joubert F."/>
            <person name="Corton C.H."/>
            <person name="Thomson N.R."/>
            <person name="Allsopp M.T."/>
            <person name="Allsopp B.A."/>
        </authorList>
    </citation>
    <scope>NUCLEOTIDE SEQUENCE [LARGE SCALE GENOMIC DNA]</scope>
    <source>
        <strain>Welgevonden</strain>
    </source>
</reference>
<reference key="2">
    <citation type="journal article" date="2006" name="J. Bacteriol.">
        <title>Comparative genomic analysis of three strains of Ehrlichia ruminantium reveals an active process of genome size plasticity.</title>
        <authorList>
            <person name="Frutos R."/>
            <person name="Viari A."/>
            <person name="Ferraz C."/>
            <person name="Morgat A."/>
            <person name="Eychenie S."/>
            <person name="Kandassamy Y."/>
            <person name="Chantal I."/>
            <person name="Bensaid A."/>
            <person name="Coissac E."/>
            <person name="Vachiery N."/>
            <person name="Demaille J."/>
            <person name="Martinez D."/>
        </authorList>
    </citation>
    <scope>NUCLEOTIDE SEQUENCE [LARGE SCALE GENOMIC DNA]</scope>
    <source>
        <strain>Welgevonden</strain>
    </source>
</reference>
<sequence>MNESKSVASNELTSGKVERTTLKLSDKLKISSNIQQGNKFSLNKSITTVEVRKSKKRKNIDEAARSSLLLQNNDIDGNSEDKNSLTIQEQISRMNALQNASNNEKREELSSDSNKHIEEEVISVKAEVEQSVDVVLPNDNLLIESDSSEKVIVDPVTDSEHGDKDFQDVVMLDEFVSSNLDDAGDQKNGDQSDDISDLLEHKGIEGKKLKKYEKEHEEKKGNPKKVMSNNTYTKHVKLVIEEELEEDNNKQVIKNYRSKKNRVTNRSVKNKITRKVLIPNKITVQELANSMSERVKDVQQVLYQMTGKHDIKLTDYLDSDQASIIVEAFNHTFKLVDNAKLENDLYSDGNNMELIPRAPVVTVMGHVDHGKTSLLDAIRESNVVDGEFKGITQHIGAYQITLNGDKKITFIDTPGHEAFAAMRAHGTNVTDIVVLVVAADDGIMPQTIESINHVKAANVAMIVAVNKIDKHDADLDRITNALLQHGVVAESLGGDVIVVPVSAKEKINLDQLKSSILLIADLLELKAVYNTRASGTVIESKVDKNCGVVATLIVQKGTLKVGDIIVAGNQAYGRVRSMFNADGGSEKVAIPSMPIKVFGLNNVPNFGTSFIVVDSEKQARELINYRQDLLNVELSKQPAVDKSNILLYDMVDELNVILKCDVMGSIEAICYSIGKITHKDIRVNILYKGVGNITKSDVLLAETSNSIILAFNVKTDTQVKELAKQKNIEIKHYFVIYDIIDDIKKILTGMLKPLKQEVQIGTLSVRKVFSVGNNGSVLGCYVTSGLVKKGALVKLVRNNNIIHEGKIKVLRRFKDDVKEVTAGFECGILLDYSKEIYPESDVMNIFEIVEEIRVIQ</sequence>
<keyword id="KW-0963">Cytoplasm</keyword>
<keyword id="KW-0342">GTP-binding</keyword>
<keyword id="KW-0396">Initiation factor</keyword>
<keyword id="KW-0547">Nucleotide-binding</keyword>
<keyword id="KW-0648">Protein biosynthesis</keyword>
<feature type="chain" id="PRO_0000228196" description="Translation initiation factor IF-2">
    <location>
        <begin position="1"/>
        <end position="856"/>
    </location>
</feature>
<feature type="domain" description="tr-type G">
    <location>
        <begin position="356"/>
        <end position="526"/>
    </location>
</feature>
<feature type="region of interest" description="G1" evidence="1">
    <location>
        <begin position="365"/>
        <end position="372"/>
    </location>
</feature>
<feature type="region of interest" description="G2" evidence="1">
    <location>
        <begin position="390"/>
        <end position="394"/>
    </location>
</feature>
<feature type="region of interest" description="G3" evidence="1">
    <location>
        <begin position="412"/>
        <end position="415"/>
    </location>
</feature>
<feature type="region of interest" description="G4" evidence="1">
    <location>
        <begin position="466"/>
        <end position="469"/>
    </location>
</feature>
<feature type="region of interest" description="G5" evidence="1">
    <location>
        <begin position="502"/>
        <end position="504"/>
    </location>
</feature>
<feature type="binding site" evidence="2">
    <location>
        <begin position="365"/>
        <end position="372"/>
    </location>
    <ligand>
        <name>GTP</name>
        <dbReference type="ChEBI" id="CHEBI:37565"/>
    </ligand>
</feature>
<feature type="binding site" evidence="2">
    <location>
        <begin position="412"/>
        <end position="416"/>
    </location>
    <ligand>
        <name>GTP</name>
        <dbReference type="ChEBI" id="CHEBI:37565"/>
    </ligand>
</feature>
<feature type="binding site" evidence="2">
    <location>
        <begin position="466"/>
        <end position="469"/>
    </location>
    <ligand>
        <name>GTP</name>
        <dbReference type="ChEBI" id="CHEBI:37565"/>
    </ligand>
</feature>
<evidence type="ECO:0000250" key="1"/>
<evidence type="ECO:0000255" key="2">
    <source>
        <dbReference type="HAMAP-Rule" id="MF_00100"/>
    </source>
</evidence>